<protein>
    <recommendedName>
        <fullName evidence="1">Probable malate:quinone oxidoreductase</fullName>
        <ecNumber evidence="1">1.1.5.4</ecNumber>
    </recommendedName>
    <alternativeName>
        <fullName evidence="1">MQO</fullName>
    </alternativeName>
    <alternativeName>
        <fullName evidence="1">Malate dehydrogenase [quinone]</fullName>
    </alternativeName>
</protein>
<gene>
    <name evidence="1" type="primary">mqo</name>
    <name type="ordered locus">Mfla_0011</name>
</gene>
<name>MQO_METFK</name>
<reference key="1">
    <citation type="submission" date="2006-03" db="EMBL/GenBank/DDBJ databases">
        <title>Complete sequence of Methylobacillus flagellatus KT.</title>
        <authorList>
            <consortium name="US DOE Joint Genome Institute"/>
            <person name="Copeland A."/>
            <person name="Lucas S."/>
            <person name="Lapidus A."/>
            <person name="Barry K."/>
            <person name="Detter J.C."/>
            <person name="Glavina del Rio T."/>
            <person name="Hammon N."/>
            <person name="Israni S."/>
            <person name="Dalin E."/>
            <person name="Tice H."/>
            <person name="Pitluck S."/>
            <person name="Brettin T."/>
            <person name="Bruce D."/>
            <person name="Han C."/>
            <person name="Tapia R."/>
            <person name="Saunders E."/>
            <person name="Gilna P."/>
            <person name="Schmutz J."/>
            <person name="Larimer F."/>
            <person name="Land M."/>
            <person name="Kyrpides N."/>
            <person name="Anderson I."/>
            <person name="Richardson P."/>
        </authorList>
    </citation>
    <scope>NUCLEOTIDE SEQUENCE [LARGE SCALE GENOMIC DNA]</scope>
    <source>
        <strain>ATCC 51484 / DSM 6875 / VKM B-1610 / KT</strain>
    </source>
</reference>
<evidence type="ECO:0000255" key="1">
    <source>
        <dbReference type="HAMAP-Rule" id="MF_00212"/>
    </source>
</evidence>
<accession>Q1GXL1</accession>
<organism>
    <name type="scientific">Methylobacillus flagellatus (strain ATCC 51484 / DSM 6875 / VKM B-1610 / KT)</name>
    <dbReference type="NCBI Taxonomy" id="265072"/>
    <lineage>
        <taxon>Bacteria</taxon>
        <taxon>Pseudomonadati</taxon>
        <taxon>Pseudomonadota</taxon>
        <taxon>Betaproteobacteria</taxon>
        <taxon>Nitrosomonadales</taxon>
        <taxon>Methylophilaceae</taxon>
        <taxon>Methylobacillus</taxon>
    </lineage>
</organism>
<dbReference type="EC" id="1.1.5.4" evidence="1"/>
<dbReference type="EMBL" id="CP000284">
    <property type="protein sequence ID" value="ABE48282.1"/>
    <property type="molecule type" value="Genomic_DNA"/>
</dbReference>
<dbReference type="RefSeq" id="WP_011478379.1">
    <property type="nucleotide sequence ID" value="NC_007947.1"/>
</dbReference>
<dbReference type="SMR" id="Q1GXL1"/>
<dbReference type="STRING" id="265072.Mfla_0011"/>
<dbReference type="KEGG" id="mfa:Mfla_0011"/>
<dbReference type="eggNOG" id="COG0579">
    <property type="taxonomic scope" value="Bacteria"/>
</dbReference>
<dbReference type="HOGENOM" id="CLU_028151_0_0_4"/>
<dbReference type="OrthoDB" id="9763983at2"/>
<dbReference type="UniPathway" id="UPA00223">
    <property type="reaction ID" value="UER01008"/>
</dbReference>
<dbReference type="Proteomes" id="UP000002440">
    <property type="component" value="Chromosome"/>
</dbReference>
<dbReference type="GO" id="GO:0047545">
    <property type="term" value="F:2-hydroxyglutarate dehydrogenase activity"/>
    <property type="evidence" value="ECO:0007669"/>
    <property type="project" value="TreeGrafter"/>
</dbReference>
<dbReference type="GO" id="GO:0008924">
    <property type="term" value="F:L-malate dehydrogenase (quinone) activity"/>
    <property type="evidence" value="ECO:0007669"/>
    <property type="project" value="UniProtKB-UniRule"/>
</dbReference>
<dbReference type="GO" id="GO:0006099">
    <property type="term" value="P:tricarboxylic acid cycle"/>
    <property type="evidence" value="ECO:0007669"/>
    <property type="project" value="UniProtKB-UniRule"/>
</dbReference>
<dbReference type="Gene3D" id="3.30.9.10">
    <property type="entry name" value="D-Amino Acid Oxidase, subunit A, domain 2"/>
    <property type="match status" value="1"/>
</dbReference>
<dbReference type="Gene3D" id="3.50.50.60">
    <property type="entry name" value="FAD/NAD(P)-binding domain"/>
    <property type="match status" value="1"/>
</dbReference>
<dbReference type="HAMAP" id="MF_00212">
    <property type="entry name" value="MQO"/>
    <property type="match status" value="1"/>
</dbReference>
<dbReference type="InterPro" id="IPR036188">
    <property type="entry name" value="FAD/NAD-bd_sf"/>
</dbReference>
<dbReference type="InterPro" id="IPR006231">
    <property type="entry name" value="MQO"/>
</dbReference>
<dbReference type="NCBIfam" id="TIGR01320">
    <property type="entry name" value="mal_quin_oxido"/>
    <property type="match status" value="1"/>
</dbReference>
<dbReference type="NCBIfam" id="NF003603">
    <property type="entry name" value="PRK05257.1-1"/>
    <property type="match status" value="1"/>
</dbReference>
<dbReference type="NCBIfam" id="NF003605">
    <property type="entry name" value="PRK05257.1-4"/>
    <property type="match status" value="1"/>
</dbReference>
<dbReference type="NCBIfam" id="NF003606">
    <property type="entry name" value="PRK05257.2-1"/>
    <property type="match status" value="1"/>
</dbReference>
<dbReference type="NCBIfam" id="NF003611">
    <property type="entry name" value="PRK05257.3-2"/>
    <property type="match status" value="1"/>
</dbReference>
<dbReference type="NCBIfam" id="NF003613">
    <property type="entry name" value="PRK05257.3-4"/>
    <property type="match status" value="1"/>
</dbReference>
<dbReference type="NCBIfam" id="NF009875">
    <property type="entry name" value="PRK13339.1"/>
    <property type="match status" value="1"/>
</dbReference>
<dbReference type="PANTHER" id="PTHR43104">
    <property type="entry name" value="L-2-HYDROXYGLUTARATE DEHYDROGENASE, MITOCHONDRIAL"/>
    <property type="match status" value="1"/>
</dbReference>
<dbReference type="PANTHER" id="PTHR43104:SF2">
    <property type="entry name" value="L-2-HYDROXYGLUTARATE DEHYDROGENASE, MITOCHONDRIAL"/>
    <property type="match status" value="1"/>
</dbReference>
<dbReference type="Pfam" id="PF06039">
    <property type="entry name" value="Mqo"/>
    <property type="match status" value="1"/>
</dbReference>
<dbReference type="SUPFAM" id="SSF51905">
    <property type="entry name" value="FAD/NAD(P)-binding domain"/>
    <property type="match status" value="1"/>
</dbReference>
<feature type="chain" id="PRO_0000325499" description="Probable malate:quinone oxidoreductase">
    <location>
        <begin position="1"/>
        <end position="492"/>
    </location>
</feature>
<keyword id="KW-0274">FAD</keyword>
<keyword id="KW-0285">Flavoprotein</keyword>
<keyword id="KW-0560">Oxidoreductase</keyword>
<keyword id="KW-1185">Reference proteome</keyword>
<keyword id="KW-0816">Tricarboxylic acid cycle</keyword>
<proteinExistence type="inferred from homology"/>
<sequence length="492" mass="53861">MTSSLDTDILLVGGGIMSATLGTLLHQLNPELRITLVELQAEVATESSDGWNNAGTGHAGYCELNYTPQDADGSVPIARALKINAAFEESLQFWAWLVEKGILREPASFINPTPHSSFVWGEKNVAFLRKRHQALRAHHLFADMEYSQDPAVLQQWMPLVMAGRDPSIPVAATRVAYGSDVDFGSLTRQLVQHLQGRPGFKLLTRHAVTGLKQQGSWQVKAVDLSQGKPVEIRAGFVFLGAGGATLPLLQKSAIQEARGYGGFPVSGQWLVCHNPDVIHQHHAKVYGKAPLGAPPMSVPHLDTRIINGKPALLFGPFAGFTTRFLKRGSLLDLVNSVKRSNLKSMLGAGRHHMDLTRYLIGEVFQSHQQRMAALRNFYPLANESEWSLVSAGQRVQIIKQCEHQGGKLEFGTEIVSSADGSLAALLGASPGASTSVPAMLEVLQRCFSPQLQSAAWQERMREMLPSYGQSLIEDAELLRAVRYHTLSRLKLT</sequence>
<comment type="catalytic activity">
    <reaction evidence="1">
        <text>(S)-malate + a quinone = a quinol + oxaloacetate</text>
        <dbReference type="Rhea" id="RHEA:46012"/>
        <dbReference type="ChEBI" id="CHEBI:15589"/>
        <dbReference type="ChEBI" id="CHEBI:16452"/>
        <dbReference type="ChEBI" id="CHEBI:24646"/>
        <dbReference type="ChEBI" id="CHEBI:132124"/>
        <dbReference type="EC" id="1.1.5.4"/>
    </reaction>
</comment>
<comment type="cofactor">
    <cofactor evidence="1">
        <name>FAD</name>
        <dbReference type="ChEBI" id="CHEBI:57692"/>
    </cofactor>
</comment>
<comment type="pathway">
    <text evidence="1">Carbohydrate metabolism; tricarboxylic acid cycle; oxaloacetate from (S)-malate (quinone route): step 1/1.</text>
</comment>
<comment type="similarity">
    <text evidence="1">Belongs to the MQO family.</text>
</comment>